<comment type="function">
    <text evidence="1">Involved in protein export. Acts as a chaperone by maintaining the newly synthesized protein in an open conformation. Functions as a peptidyl-prolyl cis-trans isomerase.</text>
</comment>
<comment type="catalytic activity">
    <reaction evidence="1">
        <text>[protein]-peptidylproline (omega=180) = [protein]-peptidylproline (omega=0)</text>
        <dbReference type="Rhea" id="RHEA:16237"/>
        <dbReference type="Rhea" id="RHEA-COMP:10747"/>
        <dbReference type="Rhea" id="RHEA-COMP:10748"/>
        <dbReference type="ChEBI" id="CHEBI:83833"/>
        <dbReference type="ChEBI" id="CHEBI:83834"/>
        <dbReference type="EC" id="5.2.1.8"/>
    </reaction>
</comment>
<comment type="subcellular location">
    <subcellularLocation>
        <location>Cytoplasm</location>
    </subcellularLocation>
    <text evidence="1">About half TF is bound to the ribosome near the polypeptide exit tunnel while the other half is free in the cytoplasm.</text>
</comment>
<comment type="domain">
    <text evidence="1">Consists of 3 domains; the N-terminus binds the ribosome, the middle domain has PPIase activity, while the C-terminus has intrinsic chaperone activity on its own.</text>
</comment>
<comment type="similarity">
    <text evidence="1">Belongs to the FKBP-type PPIase family. Tig subfamily.</text>
</comment>
<comment type="sequence caution" evidence="2">
    <conflict type="erroneous initiation">
        <sequence resource="EMBL-CDS" id="ABO67927"/>
    </conflict>
</comment>
<organism>
    <name type="scientific">Geobacillus thermodenitrificans (strain NG80-2)</name>
    <dbReference type="NCBI Taxonomy" id="420246"/>
    <lineage>
        <taxon>Bacteria</taxon>
        <taxon>Bacillati</taxon>
        <taxon>Bacillota</taxon>
        <taxon>Bacilli</taxon>
        <taxon>Bacillales</taxon>
        <taxon>Anoxybacillaceae</taxon>
        <taxon>Geobacillus</taxon>
    </lineage>
</organism>
<dbReference type="EC" id="5.2.1.8" evidence="1"/>
<dbReference type="EMBL" id="CP000557">
    <property type="protein sequence ID" value="ABO67927.1"/>
    <property type="status" value="ALT_INIT"/>
    <property type="molecule type" value="Genomic_DNA"/>
</dbReference>
<dbReference type="RefSeq" id="WP_041264625.1">
    <property type="nucleotide sequence ID" value="NC_009328.1"/>
</dbReference>
<dbReference type="SMR" id="A4IRH3"/>
<dbReference type="KEGG" id="gtn:GTNG_2582"/>
<dbReference type="eggNOG" id="COG0544">
    <property type="taxonomic scope" value="Bacteria"/>
</dbReference>
<dbReference type="HOGENOM" id="CLU_033058_3_2_9"/>
<dbReference type="Proteomes" id="UP000001578">
    <property type="component" value="Chromosome"/>
</dbReference>
<dbReference type="GO" id="GO:0005737">
    <property type="term" value="C:cytoplasm"/>
    <property type="evidence" value="ECO:0007669"/>
    <property type="project" value="UniProtKB-SubCell"/>
</dbReference>
<dbReference type="GO" id="GO:0003755">
    <property type="term" value="F:peptidyl-prolyl cis-trans isomerase activity"/>
    <property type="evidence" value="ECO:0007669"/>
    <property type="project" value="UniProtKB-UniRule"/>
</dbReference>
<dbReference type="GO" id="GO:0044183">
    <property type="term" value="F:protein folding chaperone"/>
    <property type="evidence" value="ECO:0007669"/>
    <property type="project" value="TreeGrafter"/>
</dbReference>
<dbReference type="GO" id="GO:0043022">
    <property type="term" value="F:ribosome binding"/>
    <property type="evidence" value="ECO:0007669"/>
    <property type="project" value="TreeGrafter"/>
</dbReference>
<dbReference type="GO" id="GO:0051083">
    <property type="term" value="P:'de novo' cotranslational protein folding"/>
    <property type="evidence" value="ECO:0007669"/>
    <property type="project" value="TreeGrafter"/>
</dbReference>
<dbReference type="GO" id="GO:0051301">
    <property type="term" value="P:cell division"/>
    <property type="evidence" value="ECO:0007669"/>
    <property type="project" value="UniProtKB-KW"/>
</dbReference>
<dbReference type="GO" id="GO:0061077">
    <property type="term" value="P:chaperone-mediated protein folding"/>
    <property type="evidence" value="ECO:0007669"/>
    <property type="project" value="TreeGrafter"/>
</dbReference>
<dbReference type="GO" id="GO:0015031">
    <property type="term" value="P:protein transport"/>
    <property type="evidence" value="ECO:0007669"/>
    <property type="project" value="UniProtKB-UniRule"/>
</dbReference>
<dbReference type="GO" id="GO:0043335">
    <property type="term" value="P:protein unfolding"/>
    <property type="evidence" value="ECO:0007669"/>
    <property type="project" value="TreeGrafter"/>
</dbReference>
<dbReference type="FunFam" id="3.10.50.40:FF:000001">
    <property type="entry name" value="Trigger factor"/>
    <property type="match status" value="1"/>
</dbReference>
<dbReference type="Gene3D" id="3.10.50.40">
    <property type="match status" value="1"/>
</dbReference>
<dbReference type="Gene3D" id="3.30.70.1050">
    <property type="entry name" value="Trigger factor ribosome-binding domain"/>
    <property type="match status" value="1"/>
</dbReference>
<dbReference type="Gene3D" id="1.10.3120.10">
    <property type="entry name" value="Trigger factor, C-terminal domain"/>
    <property type="match status" value="1"/>
</dbReference>
<dbReference type="HAMAP" id="MF_00303">
    <property type="entry name" value="Trigger_factor_Tig"/>
    <property type="match status" value="1"/>
</dbReference>
<dbReference type="InterPro" id="IPR046357">
    <property type="entry name" value="PPIase_dom_sf"/>
</dbReference>
<dbReference type="InterPro" id="IPR001179">
    <property type="entry name" value="PPIase_FKBP_dom"/>
</dbReference>
<dbReference type="InterPro" id="IPR005215">
    <property type="entry name" value="Trig_fac"/>
</dbReference>
<dbReference type="InterPro" id="IPR008880">
    <property type="entry name" value="Trigger_fac_C"/>
</dbReference>
<dbReference type="InterPro" id="IPR037041">
    <property type="entry name" value="Trigger_fac_C_sf"/>
</dbReference>
<dbReference type="InterPro" id="IPR008881">
    <property type="entry name" value="Trigger_fac_ribosome-bd_bac"/>
</dbReference>
<dbReference type="InterPro" id="IPR036611">
    <property type="entry name" value="Trigger_fac_ribosome-bd_sf"/>
</dbReference>
<dbReference type="InterPro" id="IPR027304">
    <property type="entry name" value="Trigger_fact/SurA_dom_sf"/>
</dbReference>
<dbReference type="NCBIfam" id="TIGR00115">
    <property type="entry name" value="tig"/>
    <property type="match status" value="1"/>
</dbReference>
<dbReference type="PANTHER" id="PTHR30560">
    <property type="entry name" value="TRIGGER FACTOR CHAPERONE AND PEPTIDYL-PROLYL CIS/TRANS ISOMERASE"/>
    <property type="match status" value="1"/>
</dbReference>
<dbReference type="PANTHER" id="PTHR30560:SF3">
    <property type="entry name" value="TRIGGER FACTOR-LIKE PROTEIN TIG, CHLOROPLASTIC"/>
    <property type="match status" value="1"/>
</dbReference>
<dbReference type="Pfam" id="PF00254">
    <property type="entry name" value="FKBP_C"/>
    <property type="match status" value="1"/>
</dbReference>
<dbReference type="Pfam" id="PF05698">
    <property type="entry name" value="Trigger_C"/>
    <property type="match status" value="1"/>
</dbReference>
<dbReference type="Pfam" id="PF05697">
    <property type="entry name" value="Trigger_N"/>
    <property type="match status" value="1"/>
</dbReference>
<dbReference type="PIRSF" id="PIRSF003095">
    <property type="entry name" value="Trigger_factor"/>
    <property type="match status" value="1"/>
</dbReference>
<dbReference type="SUPFAM" id="SSF54534">
    <property type="entry name" value="FKBP-like"/>
    <property type="match status" value="1"/>
</dbReference>
<dbReference type="SUPFAM" id="SSF109998">
    <property type="entry name" value="Triger factor/SurA peptide-binding domain-like"/>
    <property type="match status" value="1"/>
</dbReference>
<dbReference type="SUPFAM" id="SSF102735">
    <property type="entry name" value="Trigger factor ribosome-binding domain"/>
    <property type="match status" value="1"/>
</dbReference>
<dbReference type="PROSITE" id="PS50059">
    <property type="entry name" value="FKBP_PPIASE"/>
    <property type="match status" value="1"/>
</dbReference>
<proteinExistence type="inferred from homology"/>
<reference key="1">
    <citation type="journal article" date="2007" name="Proc. Natl. Acad. Sci. U.S.A.">
        <title>Genome and proteome of long-chain alkane degrading Geobacillus thermodenitrificans NG80-2 isolated from a deep-subsurface oil reservoir.</title>
        <authorList>
            <person name="Feng L."/>
            <person name="Wang W."/>
            <person name="Cheng J."/>
            <person name="Ren Y."/>
            <person name="Zhao G."/>
            <person name="Gao C."/>
            <person name="Tang Y."/>
            <person name="Liu X."/>
            <person name="Han W."/>
            <person name="Peng X."/>
            <person name="Liu R."/>
            <person name="Wang L."/>
        </authorList>
    </citation>
    <scope>NUCLEOTIDE SEQUENCE [LARGE SCALE GENOMIC DNA]</scope>
    <source>
        <strain>NG80-2</strain>
    </source>
</reference>
<sequence length="428" mass="47923">MSVKWEKLEGNEGVLTVEVDAEQVNKGLDAAFKKVVKNVSLPGFRKGKVPRVLFEKRFGVEALYQDALDILLPEAYAKAVEEAGIEPVSMPEIDIEQMEKGKSLIFKAKVTVKPEVKLGQYKGLEVEKIDTTVTDEDVENKLKRLQENYAELVVKEEGTVENGDTAVIDFEGFVDGEPFEGGKAENYSLEIGSGTFIPGFEDQLVGMKAGEEKEIQVTFPEEYHAEQLAGKPATFKVKVHEVKAKQLPALDDEFAKDVDEEVETLDELKSKIRTRLEEAKKNEAEAAVRNAVVEKAAANAEIDIPAVMVQNETDRMLREFDQRLQMQGMNLQLYYQFSGQDEAALREQMKEDAEKRVRAALTLEAIAKAENIDVTDEEVNEELEKMAASYNLSVDKLKELIGNLDGVKEDLKWRKTVDFLVEHSTVAA</sequence>
<feature type="chain" id="PRO_0000322446" description="Trigger factor">
    <location>
        <begin position="1"/>
        <end position="428"/>
    </location>
</feature>
<feature type="domain" description="PPIase FKBP-type" evidence="1">
    <location>
        <begin position="163"/>
        <end position="248"/>
    </location>
</feature>
<keyword id="KW-0131">Cell cycle</keyword>
<keyword id="KW-0132">Cell division</keyword>
<keyword id="KW-0143">Chaperone</keyword>
<keyword id="KW-0963">Cytoplasm</keyword>
<keyword id="KW-0413">Isomerase</keyword>
<keyword id="KW-0697">Rotamase</keyword>
<evidence type="ECO:0000255" key="1">
    <source>
        <dbReference type="HAMAP-Rule" id="MF_00303"/>
    </source>
</evidence>
<evidence type="ECO:0000305" key="2"/>
<protein>
    <recommendedName>
        <fullName evidence="1">Trigger factor</fullName>
        <shortName evidence="1">TF</shortName>
        <ecNumber evidence="1">5.2.1.8</ecNumber>
    </recommendedName>
    <alternativeName>
        <fullName evidence="1">PPIase</fullName>
    </alternativeName>
</protein>
<name>TIG_GEOTN</name>
<accession>A4IRH3</accession>
<gene>
    <name evidence="1" type="primary">tig</name>
    <name type="ordered locus">GTNG_2582</name>
</gene>